<name>TI17B_MOUSE</name>
<proteinExistence type="evidence at protein level"/>
<accession>Q9Z0V7</accession>
<protein>
    <recommendedName>
        <fullName>Mitochondrial import inner membrane translocase subunit Tim17-B</fullName>
    </recommendedName>
</protein>
<sequence>MEEYAREPCPWRIVDDCGGAFTMGVIGGGVFQAIKGFRNAPVGIRHRFRGSVNAVRIRAPQIGGSFAVWGGLFSTIDCGLVRLRGKEDPWNSISSGALTGAVLAARSGPLAMVGSAMMGGILLALIEGVGILLTRYTAQQFRNAPPFLEDPSQLTPKEGSPAPGYPNYQQYH</sequence>
<gene>
    <name type="primary">Timm17b</name>
    <name type="synonym">Tim17b</name>
</gene>
<reference key="1">
    <citation type="journal article" date="1999" name="J. Mol. Biol.">
        <title>Genetic and structural characterization of the human mitochondrial inner membrane translocase.</title>
        <authorList>
            <person name="Bauer M.F."/>
            <person name="Gempel K."/>
            <person name="Reichert A.S."/>
            <person name="Rappold G.A."/>
            <person name="Lichtner P."/>
            <person name="Gerbitz K.-D."/>
            <person name="Neupert W."/>
            <person name="Brunner M."/>
            <person name="Hofmann S."/>
        </authorList>
    </citation>
    <scope>NUCLEOTIDE SEQUENCE [MRNA]</scope>
</reference>
<reference key="2">
    <citation type="journal article" date="2004" name="Genome Res.">
        <title>The status, quality, and expansion of the NIH full-length cDNA project: the Mammalian Gene Collection (MGC).</title>
        <authorList>
            <consortium name="The MGC Project Team"/>
        </authorList>
    </citation>
    <scope>NUCLEOTIDE SEQUENCE [LARGE SCALE MRNA]</scope>
    <source>
        <strain>C57BL/6J</strain>
        <tissue>Mammary gland</tissue>
    </source>
</reference>
<reference key="3">
    <citation type="journal article" date="2010" name="Cell">
        <title>A tissue-specific atlas of mouse protein phosphorylation and expression.</title>
        <authorList>
            <person name="Huttlin E.L."/>
            <person name="Jedrychowski M.P."/>
            <person name="Elias J.E."/>
            <person name="Goswami T."/>
            <person name="Rad R."/>
            <person name="Beausoleil S.A."/>
            <person name="Villen J."/>
            <person name="Haas W."/>
            <person name="Sowa M.E."/>
            <person name="Gygi S.P."/>
        </authorList>
    </citation>
    <scope>IDENTIFICATION BY MASS SPECTROMETRY [LARGE SCALE ANALYSIS]</scope>
    <source>
        <tissue>Brown adipose tissue</tissue>
        <tissue>Heart</tissue>
        <tissue>Kidney</tissue>
        <tissue>Liver</tissue>
        <tissue>Lung</tissue>
        <tissue>Pancreas</tissue>
        <tissue>Spleen</tissue>
        <tissue>Testis</tissue>
    </source>
</reference>
<keyword id="KW-1015">Disulfide bond</keyword>
<keyword id="KW-0472">Membrane</keyword>
<keyword id="KW-0496">Mitochondrion</keyword>
<keyword id="KW-0999">Mitochondrion inner membrane</keyword>
<keyword id="KW-0653">Protein transport</keyword>
<keyword id="KW-1185">Reference proteome</keyword>
<keyword id="KW-0811">Translocation</keyword>
<keyword id="KW-0812">Transmembrane</keyword>
<keyword id="KW-1133">Transmembrane helix</keyword>
<keyword id="KW-0813">Transport</keyword>
<organism>
    <name type="scientific">Mus musculus</name>
    <name type="common">Mouse</name>
    <dbReference type="NCBI Taxonomy" id="10090"/>
    <lineage>
        <taxon>Eukaryota</taxon>
        <taxon>Metazoa</taxon>
        <taxon>Chordata</taxon>
        <taxon>Craniata</taxon>
        <taxon>Vertebrata</taxon>
        <taxon>Euteleostomi</taxon>
        <taxon>Mammalia</taxon>
        <taxon>Eutheria</taxon>
        <taxon>Euarchontoglires</taxon>
        <taxon>Glires</taxon>
        <taxon>Rodentia</taxon>
        <taxon>Myomorpha</taxon>
        <taxon>Muroidea</taxon>
        <taxon>Muridae</taxon>
        <taxon>Murinae</taxon>
        <taxon>Mus</taxon>
        <taxon>Mus</taxon>
    </lineage>
</organism>
<evidence type="ECO:0000250" key="1"/>
<evidence type="ECO:0000250" key="2">
    <source>
        <dbReference type="UniProtKB" id="P39515"/>
    </source>
</evidence>
<evidence type="ECO:0000255" key="3"/>
<evidence type="ECO:0000256" key="4">
    <source>
        <dbReference type="SAM" id="MobiDB-lite"/>
    </source>
</evidence>
<evidence type="ECO:0000305" key="5"/>
<comment type="function">
    <text>Essential component of the TIM23 complex, a complex that mediates the translocation of transit peptide-containing proteins across the mitochondrial inner membrane.</text>
</comment>
<comment type="subunit">
    <text evidence="1">Component of the TIM23 complex at least composed of TIMM23, TIMM17 (TIMM17A or TIMM17B) and TIMM50. The complex interacts with the TIMM44 component of the PAM complex. The complex also interacts with DNAJC15 (By similarity).</text>
</comment>
<comment type="subcellular location">
    <subcellularLocation>
        <location>Mitochondrion inner membrane</location>
        <topology>Multi-pass membrane protein</topology>
    </subcellularLocation>
</comment>
<comment type="similarity">
    <text evidence="5">Belongs to the Tim17/Tim22/Tim23 family.</text>
</comment>
<dbReference type="EMBL" id="AF106621">
    <property type="protein sequence ID" value="AAD19595.1"/>
    <property type="molecule type" value="mRNA"/>
</dbReference>
<dbReference type="EMBL" id="BC008275">
    <property type="protein sequence ID" value="AAH08275.1"/>
    <property type="molecule type" value="mRNA"/>
</dbReference>
<dbReference type="CCDS" id="CCDS29978.1"/>
<dbReference type="RefSeq" id="NP_035721.1">
    <property type="nucleotide sequence ID" value="NM_011591.5"/>
</dbReference>
<dbReference type="SMR" id="Q9Z0V7"/>
<dbReference type="BioGRID" id="204200">
    <property type="interactions" value="4"/>
</dbReference>
<dbReference type="FunCoup" id="Q9Z0V7">
    <property type="interactions" value="1904"/>
</dbReference>
<dbReference type="STRING" id="10090.ENSMUSP00000033498"/>
<dbReference type="iPTMnet" id="Q9Z0V7"/>
<dbReference type="PhosphoSitePlus" id="Q9Z0V7"/>
<dbReference type="SwissPalm" id="Q9Z0V7"/>
<dbReference type="jPOST" id="Q9Z0V7"/>
<dbReference type="PaxDb" id="10090-ENSMUSP00000033498"/>
<dbReference type="ProteomicsDB" id="258878"/>
<dbReference type="Pumba" id="Q9Z0V7"/>
<dbReference type="Antibodypedia" id="25886">
    <property type="antibodies" value="77 antibodies from 19 providers"/>
</dbReference>
<dbReference type="DNASU" id="21855"/>
<dbReference type="Ensembl" id="ENSMUST00000033498.11">
    <property type="protein sequence ID" value="ENSMUSP00000033498.4"/>
    <property type="gene ID" value="ENSMUSG00000031158.13"/>
</dbReference>
<dbReference type="GeneID" id="21855"/>
<dbReference type="KEGG" id="mmu:21855"/>
<dbReference type="UCSC" id="uc009sne.1">
    <property type="organism name" value="mouse"/>
</dbReference>
<dbReference type="AGR" id="MGI:1343176"/>
<dbReference type="CTD" id="10245"/>
<dbReference type="MGI" id="MGI:1343176">
    <property type="gene designation" value="Timm17b"/>
</dbReference>
<dbReference type="VEuPathDB" id="HostDB:ENSMUSG00000031158"/>
<dbReference type="eggNOG" id="KOG1652">
    <property type="taxonomic scope" value="Eukaryota"/>
</dbReference>
<dbReference type="GeneTree" id="ENSGT00390000017780"/>
<dbReference type="HOGENOM" id="CLU_087811_1_1_1"/>
<dbReference type="InParanoid" id="Q9Z0V7"/>
<dbReference type="OMA" id="FDCTFQY"/>
<dbReference type="OrthoDB" id="2261329at2759"/>
<dbReference type="PhylomeDB" id="Q9Z0V7"/>
<dbReference type="TreeFam" id="TF106195"/>
<dbReference type="BioGRID-ORCS" id="21855">
    <property type="hits" value="4 hits in 75 CRISPR screens"/>
</dbReference>
<dbReference type="PRO" id="PR:Q9Z0V7"/>
<dbReference type="Proteomes" id="UP000000589">
    <property type="component" value="Chromosome X"/>
</dbReference>
<dbReference type="RNAct" id="Q9Z0V7">
    <property type="molecule type" value="protein"/>
</dbReference>
<dbReference type="Bgee" id="ENSMUSG00000031158">
    <property type="expression patterns" value="Expressed in internal carotid artery and 263 other cell types or tissues"/>
</dbReference>
<dbReference type="ExpressionAtlas" id="Q9Z0V7">
    <property type="expression patterns" value="baseline and differential"/>
</dbReference>
<dbReference type="GO" id="GO:0005743">
    <property type="term" value="C:mitochondrial inner membrane"/>
    <property type="evidence" value="ECO:0007005"/>
    <property type="project" value="MGI"/>
</dbReference>
<dbReference type="GO" id="GO:0005739">
    <property type="term" value="C:mitochondrion"/>
    <property type="evidence" value="ECO:0007005"/>
    <property type="project" value="MGI"/>
</dbReference>
<dbReference type="GO" id="GO:0005744">
    <property type="term" value="C:TIM23 mitochondrial import inner membrane translocase complex"/>
    <property type="evidence" value="ECO:0007669"/>
    <property type="project" value="Ensembl"/>
</dbReference>
<dbReference type="GO" id="GO:0008320">
    <property type="term" value="F:protein transmembrane transporter activity"/>
    <property type="evidence" value="ECO:0007669"/>
    <property type="project" value="InterPro"/>
</dbReference>
<dbReference type="GO" id="GO:0030150">
    <property type="term" value="P:protein import into mitochondrial matrix"/>
    <property type="evidence" value="ECO:0007669"/>
    <property type="project" value="InterPro"/>
</dbReference>
<dbReference type="InterPro" id="IPR005678">
    <property type="entry name" value="Tim17"/>
</dbReference>
<dbReference type="NCBIfam" id="TIGR00980">
    <property type="entry name" value="3a0801so1tim17"/>
    <property type="match status" value="1"/>
</dbReference>
<dbReference type="PANTHER" id="PTHR10485">
    <property type="entry name" value="MITOCHONDRIAL IMPORT INNER MEMBRANE TRANSLOCASE SUBUNIT TIM-17"/>
    <property type="match status" value="1"/>
</dbReference>
<dbReference type="PANTHER" id="PTHR10485:SF2">
    <property type="entry name" value="MITOCHONDRIAL IMPORT INNER MEMBRANE TRANSLOCASE SUBUNIT TIM17-B"/>
    <property type="match status" value="1"/>
</dbReference>
<dbReference type="Pfam" id="PF02466">
    <property type="entry name" value="Tim17"/>
    <property type="match status" value="1"/>
</dbReference>
<feature type="chain" id="PRO_0000210288" description="Mitochondrial import inner membrane translocase subunit Tim17-B">
    <location>
        <begin position="1"/>
        <end position="172"/>
    </location>
</feature>
<feature type="transmembrane region" description="Helical" evidence="3">
    <location>
        <begin position="17"/>
        <end position="37"/>
    </location>
</feature>
<feature type="transmembrane region" description="Helical" evidence="3">
    <location>
        <begin position="61"/>
        <end position="77"/>
    </location>
</feature>
<feature type="transmembrane region" description="Helical" evidence="3">
    <location>
        <begin position="113"/>
        <end position="133"/>
    </location>
</feature>
<feature type="region of interest" description="Disordered" evidence="4">
    <location>
        <begin position="147"/>
        <end position="172"/>
    </location>
</feature>
<feature type="disulfide bond" evidence="2">
    <location>
        <begin position="9"/>
        <end position="78"/>
    </location>
</feature>